<evidence type="ECO:0000255" key="1"/>
<evidence type="ECO:0000255" key="2">
    <source>
        <dbReference type="PROSITE-ProRule" id="PRU00159"/>
    </source>
</evidence>
<evidence type="ECO:0000255" key="3">
    <source>
        <dbReference type="PROSITE-ProRule" id="PRU10027"/>
    </source>
</evidence>
<evidence type="ECO:0000305" key="4"/>
<proteinExistence type="evidence at transcript level"/>
<gene>
    <name type="primary">WAKL20</name>
    <name type="ordered locus">At5g02070</name>
    <name type="ORF">T7H20_120</name>
</gene>
<feature type="signal peptide" evidence="1">
    <location>
        <begin position="1"/>
        <end position="23"/>
    </location>
</feature>
<feature type="chain" id="PRO_0000253321" description="Wall-associated receptor kinase-like 20">
    <location>
        <begin position="24"/>
        <end position="657"/>
    </location>
</feature>
<feature type="topological domain" description="Extracellular" evidence="1">
    <location>
        <begin position="24"/>
        <end position="293"/>
    </location>
</feature>
<feature type="transmembrane region" description="Helical" evidence="1">
    <location>
        <begin position="294"/>
        <end position="314"/>
    </location>
</feature>
<feature type="topological domain" description="Cytoplasmic" evidence="1">
    <location>
        <begin position="315"/>
        <end position="657"/>
    </location>
</feature>
<feature type="domain" description="Protein kinase" evidence="2">
    <location>
        <begin position="363"/>
        <end position="646"/>
    </location>
</feature>
<feature type="active site" description="Proton acceptor" evidence="2 3">
    <location>
        <position position="490"/>
    </location>
</feature>
<feature type="binding site" evidence="2">
    <location>
        <begin position="369"/>
        <end position="377"/>
    </location>
    <ligand>
        <name>ATP</name>
        <dbReference type="ChEBI" id="CHEBI:30616"/>
    </ligand>
</feature>
<feature type="binding site" evidence="2">
    <location>
        <position position="391"/>
    </location>
    <ligand>
        <name>ATP</name>
        <dbReference type="ChEBI" id="CHEBI:30616"/>
    </ligand>
</feature>
<feature type="glycosylation site" description="N-linked (GlcNAc...) asparagine" evidence="1">
    <location>
        <position position="140"/>
    </location>
</feature>
<comment type="function">
    <text>Serine/threonine-protein kinase that may function as a signaling receptor of extracellular matrix component.</text>
</comment>
<comment type="catalytic activity">
    <reaction>
        <text>L-seryl-[protein] + ATP = O-phospho-L-seryl-[protein] + ADP + H(+)</text>
        <dbReference type="Rhea" id="RHEA:17989"/>
        <dbReference type="Rhea" id="RHEA-COMP:9863"/>
        <dbReference type="Rhea" id="RHEA-COMP:11604"/>
        <dbReference type="ChEBI" id="CHEBI:15378"/>
        <dbReference type="ChEBI" id="CHEBI:29999"/>
        <dbReference type="ChEBI" id="CHEBI:30616"/>
        <dbReference type="ChEBI" id="CHEBI:83421"/>
        <dbReference type="ChEBI" id="CHEBI:456216"/>
    </reaction>
</comment>
<comment type="catalytic activity">
    <reaction>
        <text>L-threonyl-[protein] + ATP = O-phospho-L-threonyl-[protein] + ADP + H(+)</text>
        <dbReference type="Rhea" id="RHEA:46608"/>
        <dbReference type="Rhea" id="RHEA-COMP:11060"/>
        <dbReference type="Rhea" id="RHEA-COMP:11605"/>
        <dbReference type="ChEBI" id="CHEBI:15378"/>
        <dbReference type="ChEBI" id="CHEBI:30013"/>
        <dbReference type="ChEBI" id="CHEBI:30616"/>
        <dbReference type="ChEBI" id="CHEBI:61977"/>
        <dbReference type="ChEBI" id="CHEBI:456216"/>
    </reaction>
</comment>
<comment type="subcellular location">
    <subcellularLocation>
        <location evidence="4">Membrane</location>
        <topology evidence="4">Single-pass type I membrane protein</topology>
    </subcellularLocation>
</comment>
<comment type="similarity">
    <text evidence="2">Belongs to the protein kinase superfamily. Ser/Thr protein kinase family.</text>
</comment>
<comment type="caution">
    <text evidence="4">Lacks the calcium-binding EGF-like domain which is a conserved feature of the wall-associated receptor kinase family.</text>
</comment>
<sequence>MEKKRSYYALLIPTLLTVWLACAGHSCARHAKAKPPMAGPPRCPNCGPMVVPYPLSTGPTCGDQAYRINCVGGKLYFGALHGSSYVITSINSVTQRIVLRPPGLASSVSCISADVSKQGLELDPHLPFSITSSNTILLLNCSQAMLQAPIDCSPTSLCYSYIKNNASPCSKAPLCCTFRTDGSQTAYTIRINGGGCLAYQSFVGLNPNKEVPPPGKKWPDTGLELQWALPKEPVCKTDVDCNLLLGKSKCLPDPTSLGLKRCSCKKGLEWDPVNAICGKCRHGKHCKKKKKTVVFAGAAVAVVGVTLAIAVAVIGTKHSHQKVKKDIHKNIVKEREEMLSANSTGKSSRIFTGREITKATNNFSKDNLIGTGGFGEVFKAVLEDGTITAIKRAKLNNTKGTDQILNEVRILCQVNHRSLVRLLGCCVDLELPLLIYEFIPNGTLFEHLHGSSDRTWKPLTWRRRLQIAYQTAEGLAYLHSAAQPPIYHRDVKSSNILLDEKLNAKVSDFGLSRLVDLTETANNESHIFTGAQGTLGYLDPEYYRNFQLTDKSDVYSFGVVLLEMVTSKKAIDFTREEEDVNLVMYINKMMDQERLTECIDPLLKKTANKIDMQTIQQLGNLASACLNERRQNRPSMKEVADEIEYIINILSQEVTET</sequence>
<dbReference type="EC" id="2.7.11.-"/>
<dbReference type="EMBL" id="AL162508">
    <property type="protein sequence ID" value="CAB82980.1"/>
    <property type="molecule type" value="Genomic_DNA"/>
</dbReference>
<dbReference type="EMBL" id="CP002688">
    <property type="protein sequence ID" value="AED90428.1"/>
    <property type="molecule type" value="Genomic_DNA"/>
</dbReference>
<dbReference type="PIR" id="T48228">
    <property type="entry name" value="T48228"/>
</dbReference>
<dbReference type="RefSeq" id="NP_195827.1">
    <property type="nucleotide sequence ID" value="NM_120285.1"/>
</dbReference>
<dbReference type="SMR" id="Q9LZM4"/>
<dbReference type="FunCoup" id="Q9LZM4">
    <property type="interactions" value="396"/>
</dbReference>
<dbReference type="GlyCosmos" id="Q9LZM4">
    <property type="glycosylation" value="1 site, No reported glycans"/>
</dbReference>
<dbReference type="GlyGen" id="Q9LZM4">
    <property type="glycosylation" value="2 sites"/>
</dbReference>
<dbReference type="PaxDb" id="3702-AT5G02070.1"/>
<dbReference type="ProteomicsDB" id="242651"/>
<dbReference type="EnsemblPlants" id="AT5G02070.1">
    <property type="protein sequence ID" value="AT5G02070.1"/>
    <property type="gene ID" value="AT5G02070"/>
</dbReference>
<dbReference type="GeneID" id="831776"/>
<dbReference type="Gramene" id="AT5G02070.1">
    <property type="protein sequence ID" value="AT5G02070.1"/>
    <property type="gene ID" value="AT5G02070"/>
</dbReference>
<dbReference type="KEGG" id="ath:AT5G02070"/>
<dbReference type="Araport" id="AT5G02070"/>
<dbReference type="TAIR" id="AT5G02070"/>
<dbReference type="eggNOG" id="KOG1187">
    <property type="taxonomic scope" value="Eukaryota"/>
</dbReference>
<dbReference type="HOGENOM" id="CLU_000288_43_5_1"/>
<dbReference type="InParanoid" id="Q9LZM4"/>
<dbReference type="OMA" id="EPVCKTD"/>
<dbReference type="PhylomeDB" id="Q9LZM4"/>
<dbReference type="PRO" id="PR:Q9LZM4"/>
<dbReference type="Proteomes" id="UP000006548">
    <property type="component" value="Chromosome 5"/>
</dbReference>
<dbReference type="ExpressionAtlas" id="Q9LZM4">
    <property type="expression patterns" value="baseline and differential"/>
</dbReference>
<dbReference type="GO" id="GO:0016020">
    <property type="term" value="C:membrane"/>
    <property type="evidence" value="ECO:0007669"/>
    <property type="project" value="UniProtKB-SubCell"/>
</dbReference>
<dbReference type="GO" id="GO:0005524">
    <property type="term" value="F:ATP binding"/>
    <property type="evidence" value="ECO:0007669"/>
    <property type="project" value="UniProtKB-KW"/>
</dbReference>
<dbReference type="GO" id="GO:0106310">
    <property type="term" value="F:protein serine kinase activity"/>
    <property type="evidence" value="ECO:0007669"/>
    <property type="project" value="RHEA"/>
</dbReference>
<dbReference type="GO" id="GO:0004674">
    <property type="term" value="F:protein serine/threonine kinase activity"/>
    <property type="evidence" value="ECO:0007669"/>
    <property type="project" value="UniProtKB-KW"/>
</dbReference>
<dbReference type="CDD" id="cd14066">
    <property type="entry name" value="STKc_IRAK"/>
    <property type="match status" value="1"/>
</dbReference>
<dbReference type="FunFam" id="1.10.510.10:FF:000161">
    <property type="entry name" value="Wall-associated receptor kinase-like 20"/>
    <property type="match status" value="1"/>
</dbReference>
<dbReference type="FunFam" id="3.30.200.20:FF:000446">
    <property type="entry name" value="Wall-associated receptor kinase-like 20"/>
    <property type="match status" value="1"/>
</dbReference>
<dbReference type="Gene3D" id="3.30.200.20">
    <property type="entry name" value="Phosphorylase Kinase, domain 1"/>
    <property type="match status" value="1"/>
</dbReference>
<dbReference type="Gene3D" id="1.10.510.10">
    <property type="entry name" value="Transferase(Phosphotransferase) domain 1"/>
    <property type="match status" value="1"/>
</dbReference>
<dbReference type="InterPro" id="IPR011009">
    <property type="entry name" value="Kinase-like_dom_sf"/>
</dbReference>
<dbReference type="InterPro" id="IPR000719">
    <property type="entry name" value="Prot_kinase_dom"/>
</dbReference>
<dbReference type="InterPro" id="IPR017441">
    <property type="entry name" value="Protein_kinase_ATP_BS"/>
</dbReference>
<dbReference type="InterPro" id="IPR008271">
    <property type="entry name" value="Ser/Thr_kinase_AS"/>
</dbReference>
<dbReference type="PANTHER" id="PTHR46008">
    <property type="entry name" value="LEAF RUST 10 DISEASE-RESISTANCE LOCUS RECEPTOR-LIKE PROTEIN KINASE-LIKE 1.4"/>
    <property type="match status" value="1"/>
</dbReference>
<dbReference type="PANTHER" id="PTHR46008:SF25">
    <property type="entry name" value="PROTEIN KINASE DOMAIN-CONTAINING PROTEIN"/>
    <property type="match status" value="1"/>
</dbReference>
<dbReference type="Pfam" id="PF00069">
    <property type="entry name" value="Pkinase"/>
    <property type="match status" value="1"/>
</dbReference>
<dbReference type="SMART" id="SM00220">
    <property type="entry name" value="S_TKc"/>
    <property type="match status" value="1"/>
</dbReference>
<dbReference type="SUPFAM" id="SSF56112">
    <property type="entry name" value="Protein kinase-like (PK-like)"/>
    <property type="match status" value="1"/>
</dbReference>
<dbReference type="PROSITE" id="PS00107">
    <property type="entry name" value="PROTEIN_KINASE_ATP"/>
    <property type="match status" value="1"/>
</dbReference>
<dbReference type="PROSITE" id="PS50011">
    <property type="entry name" value="PROTEIN_KINASE_DOM"/>
    <property type="match status" value="1"/>
</dbReference>
<dbReference type="PROSITE" id="PS00108">
    <property type="entry name" value="PROTEIN_KINASE_ST"/>
    <property type="match status" value="1"/>
</dbReference>
<protein>
    <recommendedName>
        <fullName>Wall-associated receptor kinase-like 20</fullName>
        <ecNumber>2.7.11.-</ecNumber>
    </recommendedName>
</protein>
<organism>
    <name type="scientific">Arabidopsis thaliana</name>
    <name type="common">Mouse-ear cress</name>
    <dbReference type="NCBI Taxonomy" id="3702"/>
    <lineage>
        <taxon>Eukaryota</taxon>
        <taxon>Viridiplantae</taxon>
        <taxon>Streptophyta</taxon>
        <taxon>Embryophyta</taxon>
        <taxon>Tracheophyta</taxon>
        <taxon>Spermatophyta</taxon>
        <taxon>Magnoliopsida</taxon>
        <taxon>eudicotyledons</taxon>
        <taxon>Gunneridae</taxon>
        <taxon>Pentapetalae</taxon>
        <taxon>rosids</taxon>
        <taxon>malvids</taxon>
        <taxon>Brassicales</taxon>
        <taxon>Brassicaceae</taxon>
        <taxon>Camelineae</taxon>
        <taxon>Arabidopsis</taxon>
    </lineage>
</organism>
<keyword id="KW-0067">ATP-binding</keyword>
<keyword id="KW-0325">Glycoprotein</keyword>
<keyword id="KW-0418">Kinase</keyword>
<keyword id="KW-0472">Membrane</keyword>
<keyword id="KW-0547">Nucleotide-binding</keyword>
<keyword id="KW-1185">Reference proteome</keyword>
<keyword id="KW-0723">Serine/threonine-protein kinase</keyword>
<keyword id="KW-0732">Signal</keyword>
<keyword id="KW-0808">Transferase</keyword>
<keyword id="KW-0812">Transmembrane</keyword>
<keyword id="KW-1133">Transmembrane helix</keyword>
<accession>Q9LZM4</accession>
<reference key="1">
    <citation type="journal article" date="2000" name="Nature">
        <title>Sequence and analysis of chromosome 5 of the plant Arabidopsis thaliana.</title>
        <authorList>
            <person name="Tabata S."/>
            <person name="Kaneko T."/>
            <person name="Nakamura Y."/>
            <person name="Kotani H."/>
            <person name="Kato T."/>
            <person name="Asamizu E."/>
            <person name="Miyajima N."/>
            <person name="Sasamoto S."/>
            <person name="Kimura T."/>
            <person name="Hosouchi T."/>
            <person name="Kawashima K."/>
            <person name="Kohara M."/>
            <person name="Matsumoto M."/>
            <person name="Matsuno A."/>
            <person name="Muraki A."/>
            <person name="Nakayama S."/>
            <person name="Nakazaki N."/>
            <person name="Naruo K."/>
            <person name="Okumura S."/>
            <person name="Shinpo S."/>
            <person name="Takeuchi C."/>
            <person name="Wada T."/>
            <person name="Watanabe A."/>
            <person name="Yamada M."/>
            <person name="Yasuda M."/>
            <person name="Sato S."/>
            <person name="de la Bastide M."/>
            <person name="Huang E."/>
            <person name="Spiegel L."/>
            <person name="Gnoj L."/>
            <person name="O'Shaughnessy A."/>
            <person name="Preston R."/>
            <person name="Habermann K."/>
            <person name="Murray J."/>
            <person name="Johnson D."/>
            <person name="Rohlfing T."/>
            <person name="Nelson J."/>
            <person name="Stoneking T."/>
            <person name="Pepin K."/>
            <person name="Spieth J."/>
            <person name="Sekhon M."/>
            <person name="Armstrong J."/>
            <person name="Becker M."/>
            <person name="Belter E."/>
            <person name="Cordum H."/>
            <person name="Cordes M."/>
            <person name="Courtney L."/>
            <person name="Courtney W."/>
            <person name="Dante M."/>
            <person name="Du H."/>
            <person name="Edwards J."/>
            <person name="Fryman J."/>
            <person name="Haakensen B."/>
            <person name="Lamar E."/>
            <person name="Latreille P."/>
            <person name="Leonard S."/>
            <person name="Meyer R."/>
            <person name="Mulvaney E."/>
            <person name="Ozersky P."/>
            <person name="Riley A."/>
            <person name="Strowmatt C."/>
            <person name="Wagner-McPherson C."/>
            <person name="Wollam A."/>
            <person name="Yoakum M."/>
            <person name="Bell M."/>
            <person name="Dedhia N."/>
            <person name="Parnell L."/>
            <person name="Shah R."/>
            <person name="Rodriguez M."/>
            <person name="Hoon See L."/>
            <person name="Vil D."/>
            <person name="Baker J."/>
            <person name="Kirchoff K."/>
            <person name="Toth K."/>
            <person name="King L."/>
            <person name="Bahret A."/>
            <person name="Miller B."/>
            <person name="Marra M.A."/>
            <person name="Martienssen R."/>
            <person name="McCombie W.R."/>
            <person name="Wilson R.K."/>
            <person name="Murphy G."/>
            <person name="Bancroft I."/>
            <person name="Volckaert G."/>
            <person name="Wambutt R."/>
            <person name="Duesterhoeft A."/>
            <person name="Stiekema W."/>
            <person name="Pohl T."/>
            <person name="Entian K.-D."/>
            <person name="Terryn N."/>
            <person name="Hartley N."/>
            <person name="Bent E."/>
            <person name="Johnson S."/>
            <person name="Langham S.-A."/>
            <person name="McCullagh B."/>
            <person name="Robben J."/>
            <person name="Grymonprez B."/>
            <person name="Zimmermann W."/>
            <person name="Ramsperger U."/>
            <person name="Wedler H."/>
            <person name="Balke K."/>
            <person name="Wedler E."/>
            <person name="Peters S."/>
            <person name="van Staveren M."/>
            <person name="Dirkse W."/>
            <person name="Mooijman P."/>
            <person name="Klein Lankhorst R."/>
            <person name="Weitzenegger T."/>
            <person name="Bothe G."/>
            <person name="Rose M."/>
            <person name="Hauf J."/>
            <person name="Berneiser S."/>
            <person name="Hempel S."/>
            <person name="Feldpausch M."/>
            <person name="Lamberth S."/>
            <person name="Villarroel R."/>
            <person name="Gielen J."/>
            <person name="Ardiles W."/>
            <person name="Bents O."/>
            <person name="Lemcke K."/>
            <person name="Kolesov G."/>
            <person name="Mayer K.F.X."/>
            <person name="Rudd S."/>
            <person name="Schoof H."/>
            <person name="Schueller C."/>
            <person name="Zaccaria P."/>
            <person name="Mewes H.-W."/>
            <person name="Bevan M."/>
            <person name="Fransz P.F."/>
        </authorList>
    </citation>
    <scope>NUCLEOTIDE SEQUENCE [LARGE SCALE GENOMIC DNA]</scope>
    <source>
        <strain>cv. Columbia</strain>
    </source>
</reference>
<reference key="2">
    <citation type="journal article" date="2017" name="Plant J.">
        <title>Araport11: a complete reannotation of the Arabidopsis thaliana reference genome.</title>
        <authorList>
            <person name="Cheng C.Y."/>
            <person name="Krishnakumar V."/>
            <person name="Chan A.P."/>
            <person name="Thibaud-Nissen F."/>
            <person name="Schobel S."/>
            <person name="Town C.D."/>
        </authorList>
    </citation>
    <scope>GENOME REANNOTATION</scope>
    <source>
        <strain>cv. Columbia</strain>
    </source>
</reference>
<reference key="3">
    <citation type="journal article" date="2002" name="Plant Physiol.">
        <title>The cell wall-associated kinase (WAK) and WAK-like kinase gene family.</title>
        <authorList>
            <person name="Verica J.A."/>
            <person name="He Z.-H."/>
        </authorList>
    </citation>
    <scope>GENE FAMILY ORGANIZATION</scope>
</reference>
<name>WAKLQ_ARATH</name>